<accession>B8A9X1</accession>
<protein>
    <recommendedName>
        <fullName evidence="6">Small polypeptide ROTUNDIFOLIA LIKE 3</fullName>
        <shortName evidence="6">Small polypeptide ROT-FOUR-LIKE 3</shortName>
    </recommendedName>
</protein>
<dbReference type="EMBL" id="CM000126">
    <property type="protein sequence ID" value="EEC72254.1"/>
    <property type="molecule type" value="Genomic_DNA"/>
</dbReference>
<dbReference type="SMR" id="B8A9X1"/>
<dbReference type="STRING" id="39946.B8A9X1"/>
<dbReference type="GlyCosmos" id="B8A9X1">
    <property type="glycosylation" value="3 sites, No reported glycans"/>
</dbReference>
<dbReference type="EnsemblPlants" id="BGIOSGA000018-TA">
    <property type="protein sequence ID" value="BGIOSGA000018-PA"/>
    <property type="gene ID" value="BGIOSGA000018"/>
</dbReference>
<dbReference type="EnsemblPlants" id="OsGoSa_01g0047910.01">
    <property type="protein sequence ID" value="OsGoSa_01g0047910.01"/>
    <property type="gene ID" value="OsGoSa_01g0047910"/>
</dbReference>
<dbReference type="EnsemblPlants" id="OsIR64_01g0047140.01">
    <property type="protein sequence ID" value="OsIR64_01g0047140.01"/>
    <property type="gene ID" value="OsIR64_01g0047140"/>
</dbReference>
<dbReference type="EnsemblPlants" id="OsKYG_01g0047610.01">
    <property type="protein sequence ID" value="OsKYG_01g0047610.01"/>
    <property type="gene ID" value="OsKYG_01g0047610"/>
</dbReference>
<dbReference type="EnsemblPlants" id="OsLiXu_01g0047870.01">
    <property type="protein sequence ID" value="OsLiXu_01g0047870.01"/>
    <property type="gene ID" value="OsLiXu_01g0047870"/>
</dbReference>
<dbReference type="EnsemblPlants" id="OsMH63_01G048510_01">
    <property type="protein sequence ID" value="OsMH63_01G048510_01"/>
    <property type="gene ID" value="OsMH63_01G048510"/>
</dbReference>
<dbReference type="EnsemblPlants" id="OsPr106_01g0047670.01">
    <property type="protein sequence ID" value="OsPr106_01g0047670.01"/>
    <property type="gene ID" value="OsPr106_01g0047670"/>
</dbReference>
<dbReference type="Gramene" id="BGIOSGA000018-TA">
    <property type="protein sequence ID" value="BGIOSGA000018-PA"/>
    <property type="gene ID" value="BGIOSGA000018"/>
</dbReference>
<dbReference type="Gramene" id="OsGoSa_01g0047910.01">
    <property type="protein sequence ID" value="OsGoSa_01g0047910.01"/>
    <property type="gene ID" value="OsGoSa_01g0047910"/>
</dbReference>
<dbReference type="Gramene" id="OsIR64_01g0047140.01">
    <property type="protein sequence ID" value="OsIR64_01g0047140.01"/>
    <property type="gene ID" value="OsIR64_01g0047140"/>
</dbReference>
<dbReference type="Gramene" id="OsKYG_01g0047610.01">
    <property type="protein sequence ID" value="OsKYG_01g0047610.01"/>
    <property type="gene ID" value="OsKYG_01g0047610"/>
</dbReference>
<dbReference type="Gramene" id="OsLiXu_01g0047870.01">
    <property type="protein sequence ID" value="OsLiXu_01g0047870.01"/>
    <property type="gene ID" value="OsLiXu_01g0047870"/>
</dbReference>
<dbReference type="Gramene" id="OsMH63_01G048510_01">
    <property type="protein sequence ID" value="OsMH63_01G048510_01"/>
    <property type="gene ID" value="OsMH63_01G048510"/>
</dbReference>
<dbReference type="Gramene" id="OsPr106_01g0047670.01">
    <property type="protein sequence ID" value="OsPr106_01g0047670.01"/>
    <property type="gene ID" value="OsPr106_01g0047670"/>
</dbReference>
<dbReference type="HOGENOM" id="CLU_150897_0_0_1"/>
<dbReference type="OMA" id="CAISTCT"/>
<dbReference type="OrthoDB" id="678750at2759"/>
<dbReference type="Proteomes" id="UP000007015">
    <property type="component" value="Chromosome 1"/>
</dbReference>
<dbReference type="GO" id="GO:0005886">
    <property type="term" value="C:plasma membrane"/>
    <property type="evidence" value="ECO:0007669"/>
    <property type="project" value="UniProtKB-SubCell"/>
</dbReference>
<dbReference type="GO" id="GO:0008285">
    <property type="term" value="P:negative regulation of cell population proliferation"/>
    <property type="evidence" value="ECO:0007669"/>
    <property type="project" value="EnsemblPlants"/>
</dbReference>
<dbReference type="GO" id="GO:0048367">
    <property type="term" value="P:shoot system development"/>
    <property type="evidence" value="ECO:0007669"/>
    <property type="project" value="EnsemblPlants"/>
</dbReference>
<dbReference type="InterPro" id="IPR012552">
    <property type="entry name" value="DVL"/>
</dbReference>
<dbReference type="InterPro" id="IPR051525">
    <property type="entry name" value="DVL_RTFL_regulatory"/>
</dbReference>
<dbReference type="PANTHER" id="PTHR33102">
    <property type="entry name" value="DVL19-RELATED-RELATED"/>
    <property type="match status" value="1"/>
</dbReference>
<dbReference type="Pfam" id="PF08137">
    <property type="entry name" value="DVL"/>
    <property type="match status" value="1"/>
</dbReference>
<reference key="1">
    <citation type="journal article" date="2005" name="PLoS Biol.">
        <title>The genomes of Oryza sativa: a history of duplications.</title>
        <authorList>
            <person name="Yu J."/>
            <person name="Wang J."/>
            <person name="Lin W."/>
            <person name="Li S."/>
            <person name="Li H."/>
            <person name="Zhou J."/>
            <person name="Ni P."/>
            <person name="Dong W."/>
            <person name="Hu S."/>
            <person name="Zeng C."/>
            <person name="Zhang J."/>
            <person name="Zhang Y."/>
            <person name="Li R."/>
            <person name="Xu Z."/>
            <person name="Li S."/>
            <person name="Li X."/>
            <person name="Zheng H."/>
            <person name="Cong L."/>
            <person name="Lin L."/>
            <person name="Yin J."/>
            <person name="Geng J."/>
            <person name="Li G."/>
            <person name="Shi J."/>
            <person name="Liu J."/>
            <person name="Lv H."/>
            <person name="Li J."/>
            <person name="Wang J."/>
            <person name="Deng Y."/>
            <person name="Ran L."/>
            <person name="Shi X."/>
            <person name="Wang X."/>
            <person name="Wu Q."/>
            <person name="Li C."/>
            <person name="Ren X."/>
            <person name="Wang J."/>
            <person name="Wang X."/>
            <person name="Li D."/>
            <person name="Liu D."/>
            <person name="Zhang X."/>
            <person name="Ji Z."/>
            <person name="Zhao W."/>
            <person name="Sun Y."/>
            <person name="Zhang Z."/>
            <person name="Bao J."/>
            <person name="Han Y."/>
            <person name="Dong L."/>
            <person name="Ji J."/>
            <person name="Chen P."/>
            <person name="Wu S."/>
            <person name="Liu J."/>
            <person name="Xiao Y."/>
            <person name="Bu D."/>
            <person name="Tan J."/>
            <person name="Yang L."/>
            <person name="Ye C."/>
            <person name="Zhang J."/>
            <person name="Xu J."/>
            <person name="Zhou Y."/>
            <person name="Yu Y."/>
            <person name="Zhang B."/>
            <person name="Zhuang S."/>
            <person name="Wei H."/>
            <person name="Liu B."/>
            <person name="Lei M."/>
            <person name="Yu H."/>
            <person name="Li Y."/>
            <person name="Xu H."/>
            <person name="Wei S."/>
            <person name="He X."/>
            <person name="Fang L."/>
            <person name="Zhang Z."/>
            <person name="Zhang Y."/>
            <person name="Huang X."/>
            <person name="Su Z."/>
            <person name="Tong W."/>
            <person name="Li J."/>
            <person name="Tong Z."/>
            <person name="Li S."/>
            <person name="Ye J."/>
            <person name="Wang L."/>
            <person name="Fang L."/>
            <person name="Lei T."/>
            <person name="Chen C.-S."/>
            <person name="Chen H.-C."/>
            <person name="Xu Z."/>
            <person name="Li H."/>
            <person name="Huang H."/>
            <person name="Zhang F."/>
            <person name="Xu H."/>
            <person name="Li N."/>
            <person name="Zhao C."/>
            <person name="Li S."/>
            <person name="Dong L."/>
            <person name="Huang Y."/>
            <person name="Li L."/>
            <person name="Xi Y."/>
            <person name="Qi Q."/>
            <person name="Li W."/>
            <person name="Zhang B."/>
            <person name="Hu W."/>
            <person name="Zhang Y."/>
            <person name="Tian X."/>
            <person name="Jiao Y."/>
            <person name="Liang X."/>
            <person name="Jin J."/>
            <person name="Gao L."/>
            <person name="Zheng W."/>
            <person name="Hao B."/>
            <person name="Liu S.-M."/>
            <person name="Wang W."/>
            <person name="Yuan L."/>
            <person name="Cao M."/>
            <person name="McDermott J."/>
            <person name="Samudrala R."/>
            <person name="Wang J."/>
            <person name="Wong G.K.-S."/>
            <person name="Yang H."/>
        </authorList>
    </citation>
    <scope>NUCLEOTIDE SEQUENCE [LARGE SCALE GENOMIC DNA]</scope>
    <source>
        <strain>cv. 93-11</strain>
    </source>
</reference>
<reference key="2">
    <citation type="journal article" date="2015" name="J. Plant Res.">
        <title>Comparative analysis of the RTFL peptide family on the control of plant organogenesis.</title>
        <authorList>
            <person name="Guo P."/>
            <person name="Yoshimura A."/>
            <person name="Ishikawa N."/>
            <person name="Yamaguchi T."/>
            <person name="Guo Y."/>
            <person name="Tsukaya H."/>
        </authorList>
    </citation>
    <scope>REVIEW</scope>
    <scope>GENE FAMILY</scope>
    <scope>NOMENCLATURE</scope>
</reference>
<proteinExistence type="inferred from homology"/>
<organism>
    <name type="scientific">Oryza sativa subsp. indica</name>
    <name type="common">Rice</name>
    <dbReference type="NCBI Taxonomy" id="39946"/>
    <lineage>
        <taxon>Eukaryota</taxon>
        <taxon>Viridiplantae</taxon>
        <taxon>Streptophyta</taxon>
        <taxon>Embryophyta</taxon>
        <taxon>Tracheophyta</taxon>
        <taxon>Spermatophyta</taxon>
        <taxon>Magnoliopsida</taxon>
        <taxon>Liliopsida</taxon>
        <taxon>Poales</taxon>
        <taxon>Poaceae</taxon>
        <taxon>BOP clade</taxon>
        <taxon>Oryzoideae</taxon>
        <taxon>Oryzeae</taxon>
        <taxon>Oryzinae</taxon>
        <taxon>Oryza</taxon>
        <taxon>Oryza sativa</taxon>
    </lineage>
</organism>
<feature type="chain" id="PRO_0000452796" description="Small polypeptide ROTUNDIFOLIA LIKE 3">
    <location>
        <begin position="1"/>
        <end position="124"/>
    </location>
</feature>
<feature type="transmembrane region" description="Helical" evidence="3">
    <location>
        <begin position="59"/>
        <end position="75"/>
    </location>
</feature>
<feature type="region of interest" description="Disordered" evidence="5">
    <location>
        <begin position="1"/>
        <end position="25"/>
    </location>
</feature>
<feature type="region of interest" description="Disordered" evidence="5">
    <location>
        <begin position="60"/>
        <end position="95"/>
    </location>
</feature>
<feature type="region of interest" description="Required for DVL/RTFL small polypeptide activity" evidence="2">
    <location>
        <begin position="92"/>
        <end position="124"/>
    </location>
</feature>
<feature type="compositionally biased region" description="Low complexity" evidence="5">
    <location>
        <begin position="71"/>
        <end position="91"/>
    </location>
</feature>
<feature type="glycosylation site" description="N-linked (GlcNAc...) asparagine" evidence="4">
    <location>
        <position position="35"/>
    </location>
</feature>
<feature type="glycosylation site" description="N-linked (GlcNAc...) asparagine" evidence="4">
    <location>
        <position position="38"/>
    </location>
</feature>
<feature type="glycosylation site" description="N-linked (GlcNAc...) asparagine" evidence="4">
    <location>
        <position position="88"/>
    </location>
</feature>
<name>RTFL3_ORYSI</name>
<gene>
    <name evidence="6" type="primary">RTFL3</name>
    <name evidence="8" type="ORF">OsI_05395</name>
</gene>
<sequence length="124" mass="13683">MEDERWKLSSSKGRSKSGRSCSSSSNYYCHSSDFNSSNATTLSRSYSASVTASRHATTAWSAAGAGGGGASSSSSSQHQHQQQQQQSNNSQRLSKKCVEAVKEHRARFYIVRRCVSMLVCWRDY</sequence>
<evidence type="ECO:0000250" key="1">
    <source>
        <dbReference type="UniProtKB" id="A0A5S6RB44"/>
    </source>
</evidence>
<evidence type="ECO:0000250" key="2">
    <source>
        <dbReference type="UniProtKB" id="Q7XXN8"/>
    </source>
</evidence>
<evidence type="ECO:0000255" key="3"/>
<evidence type="ECO:0000255" key="4">
    <source>
        <dbReference type="PROSITE-ProRule" id="PRU00498"/>
    </source>
</evidence>
<evidence type="ECO:0000256" key="5">
    <source>
        <dbReference type="SAM" id="MobiDB-lite"/>
    </source>
</evidence>
<evidence type="ECO:0000303" key="6">
    <source>
    </source>
</evidence>
<evidence type="ECO:0000305" key="7"/>
<evidence type="ECO:0000312" key="8">
    <source>
        <dbReference type="EMBL" id="EEC72254.1"/>
    </source>
</evidence>
<comment type="function">
    <text evidence="1">Small polypeptide acting as a regulatory molecule which coordinates cellular responses required for differentiation, growth and development, probably by restricting polar cell proliferation in lateral organs (e.g. leaves and petioles).</text>
</comment>
<comment type="subcellular location">
    <subcellularLocation>
        <location evidence="2">Cell membrane</location>
        <topology evidence="3">Single-pass membrane protein</topology>
    </subcellularLocation>
</comment>
<comment type="similarity">
    <text evidence="7">Belongs to the DVL/RTFL small polypeptides family.</text>
</comment>
<keyword id="KW-1003">Cell membrane</keyword>
<keyword id="KW-0217">Developmental protein</keyword>
<keyword id="KW-0325">Glycoprotein</keyword>
<keyword id="KW-0472">Membrane</keyword>
<keyword id="KW-1185">Reference proteome</keyword>
<keyword id="KW-0812">Transmembrane</keyword>
<keyword id="KW-1133">Transmembrane helix</keyword>